<organism>
    <name type="scientific">Escherichia coli (strain K12 / MC4100 / BW2952)</name>
    <dbReference type="NCBI Taxonomy" id="595496"/>
    <lineage>
        <taxon>Bacteria</taxon>
        <taxon>Pseudomonadati</taxon>
        <taxon>Pseudomonadota</taxon>
        <taxon>Gammaproteobacteria</taxon>
        <taxon>Enterobacterales</taxon>
        <taxon>Enterobacteriaceae</taxon>
        <taxon>Escherichia</taxon>
    </lineage>
</organism>
<feature type="chain" id="PRO_1000213850" description="Probable malonic semialdehyde reductase RutE">
    <location>
        <begin position="1"/>
        <end position="196"/>
    </location>
</feature>
<proteinExistence type="inferred from homology"/>
<reference key="1">
    <citation type="journal article" date="2009" name="J. Bacteriol.">
        <title>Genomic sequencing reveals regulatory mutations and recombinational events in the widely used MC4100 lineage of Escherichia coli K-12.</title>
        <authorList>
            <person name="Ferenci T."/>
            <person name="Zhou Z."/>
            <person name="Betteridge T."/>
            <person name="Ren Y."/>
            <person name="Liu Y."/>
            <person name="Feng L."/>
            <person name="Reeves P.R."/>
            <person name="Wang L."/>
        </authorList>
    </citation>
    <scope>NUCLEOTIDE SEQUENCE [LARGE SCALE GENOMIC DNA]</scope>
    <source>
        <strain>K12 / MC4100 / BW2952</strain>
    </source>
</reference>
<sequence>MNEAVSPGALSTLFTDARTHNGWRETPVSDETLREIYALMKWGPTSANCSPARIVFTRTAEGKERLRPALSSGNLQKTLTAPVTAIVAWDSEFYERLPLLFPHGDARSWFTSSPQLAEETAFRNSSMQAAYLIVACRALGLDTGPMSGFDRQHVDDAFFTGSTLKSNLLINIGYGDSSKLYARLPRLSFEEACGLL</sequence>
<name>RUTE_ECOBW</name>
<accession>C4ZQD6</accession>
<comment type="function">
    <text evidence="1">May reduce toxic product malonic semialdehyde to 3-hydroxypropionic acid, which is excreted.</text>
</comment>
<comment type="catalytic activity">
    <reaction evidence="1">
        <text>3-hydroxypropanoate + NADP(+) = 3-oxopropanoate + NADPH + H(+)</text>
        <dbReference type="Rhea" id="RHEA:26438"/>
        <dbReference type="ChEBI" id="CHEBI:15378"/>
        <dbReference type="ChEBI" id="CHEBI:16510"/>
        <dbReference type="ChEBI" id="CHEBI:33190"/>
        <dbReference type="ChEBI" id="CHEBI:57783"/>
        <dbReference type="ChEBI" id="CHEBI:58349"/>
        <dbReference type="EC" id="1.1.1.298"/>
    </reaction>
</comment>
<comment type="cofactor">
    <cofactor evidence="1">
        <name>FMN</name>
        <dbReference type="ChEBI" id="CHEBI:58210"/>
    </cofactor>
</comment>
<comment type="induction">
    <text evidence="1">Up-regulated by the nitrogen regulatory protein C (NtrC also called GlnG) and repressed by RutR.</text>
</comment>
<comment type="similarity">
    <text evidence="1">Belongs to the nitroreductase family. HadB/RutE subfamily.</text>
</comment>
<protein>
    <recommendedName>
        <fullName evidence="1">Probable malonic semialdehyde reductase RutE</fullName>
        <ecNumber evidence="1">1.1.1.298</ecNumber>
    </recommendedName>
</protein>
<evidence type="ECO:0000255" key="1">
    <source>
        <dbReference type="HAMAP-Rule" id="MF_01204"/>
    </source>
</evidence>
<gene>
    <name evidence="1" type="primary">rutE</name>
    <name type="ordered locus">BWG_0862</name>
</gene>
<dbReference type="EC" id="1.1.1.298" evidence="1"/>
<dbReference type="EMBL" id="CP001396">
    <property type="protein sequence ID" value="ACR64730.1"/>
    <property type="molecule type" value="Genomic_DNA"/>
</dbReference>
<dbReference type="RefSeq" id="WP_001001176.1">
    <property type="nucleotide sequence ID" value="NC_012759.1"/>
</dbReference>
<dbReference type="SMR" id="C4ZQD6"/>
<dbReference type="KEGG" id="ebw:BWG_0862"/>
<dbReference type="HOGENOM" id="CLU_084441_0_0_6"/>
<dbReference type="GO" id="GO:0035527">
    <property type="term" value="F:3-hydroxypropionate dehydrogenase (NADP+) activity"/>
    <property type="evidence" value="ECO:0007669"/>
    <property type="project" value="UniProtKB-UniRule"/>
</dbReference>
<dbReference type="GO" id="GO:0019740">
    <property type="term" value="P:nitrogen utilization"/>
    <property type="evidence" value="ECO:0007669"/>
    <property type="project" value="UniProtKB-UniRule"/>
</dbReference>
<dbReference type="GO" id="GO:0006212">
    <property type="term" value="P:uracil catabolic process"/>
    <property type="evidence" value="ECO:0007669"/>
    <property type="project" value="UniProtKB-UniRule"/>
</dbReference>
<dbReference type="CDD" id="cd02148">
    <property type="entry name" value="RutE-like"/>
    <property type="match status" value="1"/>
</dbReference>
<dbReference type="FunFam" id="3.40.109.10:FF:000003">
    <property type="entry name" value="Probable malonic semialdehyde reductase RutE"/>
    <property type="match status" value="1"/>
</dbReference>
<dbReference type="Gene3D" id="3.40.109.10">
    <property type="entry name" value="NADH Oxidase"/>
    <property type="match status" value="1"/>
</dbReference>
<dbReference type="HAMAP" id="MF_01204">
    <property type="entry name" value="Oxidoreductase_RutE_HadB"/>
    <property type="match status" value="1"/>
</dbReference>
<dbReference type="InterPro" id="IPR029479">
    <property type="entry name" value="Nitroreductase"/>
</dbReference>
<dbReference type="InterPro" id="IPR000415">
    <property type="entry name" value="Nitroreductase-like"/>
</dbReference>
<dbReference type="InterPro" id="IPR050461">
    <property type="entry name" value="Nitroreductase_HadB/RutE"/>
</dbReference>
<dbReference type="InterPro" id="IPR023936">
    <property type="entry name" value="RutE-like"/>
</dbReference>
<dbReference type="NCBIfam" id="NF003768">
    <property type="entry name" value="PRK05365.1"/>
    <property type="match status" value="1"/>
</dbReference>
<dbReference type="PANTHER" id="PTHR43543">
    <property type="entry name" value="MALONIC SEMIALDEHYDE REDUCTASE RUTE-RELATED"/>
    <property type="match status" value="1"/>
</dbReference>
<dbReference type="PANTHER" id="PTHR43543:SF1">
    <property type="entry name" value="MALONIC SEMIALDEHYDE REDUCTASE RUTE-RELATED"/>
    <property type="match status" value="1"/>
</dbReference>
<dbReference type="Pfam" id="PF00881">
    <property type="entry name" value="Nitroreductase"/>
    <property type="match status" value="1"/>
</dbReference>
<dbReference type="SUPFAM" id="SSF55469">
    <property type="entry name" value="FMN-dependent nitroreductase-like"/>
    <property type="match status" value="1"/>
</dbReference>
<keyword id="KW-0285">Flavoprotein</keyword>
<keyword id="KW-0288">FMN</keyword>
<keyword id="KW-0520">NAD</keyword>
<keyword id="KW-0521">NADP</keyword>
<keyword id="KW-0560">Oxidoreductase</keyword>